<name>LEPA_MESH7</name>
<reference key="1">
    <citation type="journal article" date="2005" name="J. Bacteriol.">
        <title>Swine and poultry pathogens: the complete genome sequences of two strains of Mycoplasma hyopneumoniae and a strain of Mycoplasma synoviae.</title>
        <authorList>
            <person name="Vasconcelos A.T.R."/>
            <person name="Ferreira H.B."/>
            <person name="Bizarro C.V."/>
            <person name="Bonatto S.L."/>
            <person name="Carvalho M.O."/>
            <person name="Pinto P.M."/>
            <person name="Almeida D.F."/>
            <person name="Almeida L.G.P."/>
            <person name="Almeida R."/>
            <person name="Alves-Junior L."/>
            <person name="Assuncao E.N."/>
            <person name="Azevedo V.A.C."/>
            <person name="Bogo M.R."/>
            <person name="Brigido M.M."/>
            <person name="Brocchi M."/>
            <person name="Burity H.A."/>
            <person name="Camargo A.A."/>
            <person name="Camargo S.S."/>
            <person name="Carepo M.S."/>
            <person name="Carraro D.M."/>
            <person name="de Mattos Cascardo J.C."/>
            <person name="Castro L.A."/>
            <person name="Cavalcanti G."/>
            <person name="Chemale G."/>
            <person name="Collevatti R.G."/>
            <person name="Cunha C.W."/>
            <person name="Dallagiovanna B."/>
            <person name="Dambros B.P."/>
            <person name="Dellagostin O.A."/>
            <person name="Falcao C."/>
            <person name="Fantinatti-Garboggini F."/>
            <person name="Felipe M.S.S."/>
            <person name="Fiorentin L."/>
            <person name="Franco G.R."/>
            <person name="Freitas N.S.A."/>
            <person name="Frias D."/>
            <person name="Grangeiro T.B."/>
            <person name="Grisard E.C."/>
            <person name="Guimaraes C.T."/>
            <person name="Hungria M."/>
            <person name="Jardim S.N."/>
            <person name="Krieger M.A."/>
            <person name="Laurino J.P."/>
            <person name="Lima L.F.A."/>
            <person name="Lopes M.I."/>
            <person name="Loreto E.L.S."/>
            <person name="Madeira H.M.F."/>
            <person name="Manfio G.P."/>
            <person name="Maranhao A.Q."/>
            <person name="Martinkovics C.T."/>
            <person name="Medeiros S.R.B."/>
            <person name="Moreira M.A.M."/>
            <person name="Neiva M."/>
            <person name="Ramalho-Neto C.E."/>
            <person name="Nicolas M.F."/>
            <person name="Oliveira S.C."/>
            <person name="Paixao R.F.C."/>
            <person name="Pedrosa F.O."/>
            <person name="Pena S.D.J."/>
            <person name="Pereira M."/>
            <person name="Pereira-Ferrari L."/>
            <person name="Piffer I."/>
            <person name="Pinto L.S."/>
            <person name="Potrich D.P."/>
            <person name="Salim A.C.M."/>
            <person name="Santos F.R."/>
            <person name="Schmitt R."/>
            <person name="Schneider M.P.C."/>
            <person name="Schrank A."/>
            <person name="Schrank I.S."/>
            <person name="Schuck A.F."/>
            <person name="Seuanez H.N."/>
            <person name="Silva D.W."/>
            <person name="Silva R."/>
            <person name="Silva S.C."/>
            <person name="Soares C.M.A."/>
            <person name="Souza K.R.L."/>
            <person name="Souza R.C."/>
            <person name="Staats C.C."/>
            <person name="Steffens M.B.R."/>
            <person name="Teixeira S.M.R."/>
            <person name="Urmenyi T.P."/>
            <person name="Vainstein M.H."/>
            <person name="Zuccherato L.W."/>
            <person name="Simpson A.J.G."/>
            <person name="Zaha A."/>
        </authorList>
    </citation>
    <scope>NUCLEOTIDE SEQUENCE [LARGE SCALE GENOMIC DNA]</scope>
    <source>
        <strain>7448</strain>
    </source>
</reference>
<keyword id="KW-1003">Cell membrane</keyword>
<keyword id="KW-0342">GTP-binding</keyword>
<keyword id="KW-0378">Hydrolase</keyword>
<keyword id="KW-0472">Membrane</keyword>
<keyword id="KW-0547">Nucleotide-binding</keyword>
<keyword id="KW-0648">Protein biosynthesis</keyword>
<accession>Q4A8T9</accession>
<evidence type="ECO:0000255" key="1">
    <source>
        <dbReference type="HAMAP-Rule" id="MF_00071"/>
    </source>
</evidence>
<comment type="function">
    <text evidence="1">Required for accurate and efficient protein synthesis under certain stress conditions. May act as a fidelity factor of the translation reaction, by catalyzing a one-codon backward translocation of tRNAs on improperly translocated ribosomes. Back-translocation proceeds from a post-translocation (POST) complex to a pre-translocation (PRE) complex, thus giving elongation factor G a second chance to translocate the tRNAs correctly. Binds to ribosomes in a GTP-dependent manner.</text>
</comment>
<comment type="catalytic activity">
    <reaction evidence="1">
        <text>GTP + H2O = GDP + phosphate + H(+)</text>
        <dbReference type="Rhea" id="RHEA:19669"/>
        <dbReference type="ChEBI" id="CHEBI:15377"/>
        <dbReference type="ChEBI" id="CHEBI:15378"/>
        <dbReference type="ChEBI" id="CHEBI:37565"/>
        <dbReference type="ChEBI" id="CHEBI:43474"/>
        <dbReference type="ChEBI" id="CHEBI:58189"/>
        <dbReference type="EC" id="3.6.5.n1"/>
    </reaction>
</comment>
<comment type="subcellular location">
    <subcellularLocation>
        <location evidence="1">Cell membrane</location>
        <topology evidence="1">Peripheral membrane protein</topology>
        <orientation evidence="1">Cytoplasmic side</orientation>
    </subcellularLocation>
</comment>
<comment type="similarity">
    <text evidence="1">Belongs to the TRAFAC class translation factor GTPase superfamily. Classic translation factor GTPase family. LepA subfamily.</text>
</comment>
<gene>
    <name evidence="1" type="primary">lepA</name>
    <name type="ordered locus">MHP7448_0073</name>
</gene>
<proteinExistence type="inferred from homology"/>
<organism>
    <name type="scientific">Mesomycoplasma hyopneumoniae (strain 7448)</name>
    <name type="common">Mycoplasma hyopneumoniae</name>
    <dbReference type="NCBI Taxonomy" id="262722"/>
    <lineage>
        <taxon>Bacteria</taxon>
        <taxon>Bacillati</taxon>
        <taxon>Mycoplasmatota</taxon>
        <taxon>Mycoplasmoidales</taxon>
        <taxon>Metamycoplasmataceae</taxon>
        <taxon>Mesomycoplasma</taxon>
    </lineage>
</organism>
<dbReference type="EC" id="3.6.5.n1" evidence="1"/>
<dbReference type="EMBL" id="AE017244">
    <property type="protein sequence ID" value="AAZ53450.1"/>
    <property type="molecule type" value="Genomic_DNA"/>
</dbReference>
<dbReference type="RefSeq" id="WP_011289989.1">
    <property type="nucleotide sequence ID" value="NC_007332.1"/>
</dbReference>
<dbReference type="SMR" id="Q4A8T9"/>
<dbReference type="KEGG" id="mhp:MHP7448_0073"/>
<dbReference type="HOGENOM" id="CLU_009995_3_3_14"/>
<dbReference type="Proteomes" id="UP000000553">
    <property type="component" value="Chromosome"/>
</dbReference>
<dbReference type="GO" id="GO:0005886">
    <property type="term" value="C:plasma membrane"/>
    <property type="evidence" value="ECO:0007669"/>
    <property type="project" value="UniProtKB-SubCell"/>
</dbReference>
<dbReference type="GO" id="GO:0005525">
    <property type="term" value="F:GTP binding"/>
    <property type="evidence" value="ECO:0007669"/>
    <property type="project" value="UniProtKB-UniRule"/>
</dbReference>
<dbReference type="GO" id="GO:0003924">
    <property type="term" value="F:GTPase activity"/>
    <property type="evidence" value="ECO:0007669"/>
    <property type="project" value="UniProtKB-UniRule"/>
</dbReference>
<dbReference type="GO" id="GO:0043022">
    <property type="term" value="F:ribosome binding"/>
    <property type="evidence" value="ECO:0007669"/>
    <property type="project" value="UniProtKB-UniRule"/>
</dbReference>
<dbReference type="GO" id="GO:0003746">
    <property type="term" value="F:translation elongation factor activity"/>
    <property type="evidence" value="ECO:0007669"/>
    <property type="project" value="UniProtKB-UniRule"/>
</dbReference>
<dbReference type="GO" id="GO:0045727">
    <property type="term" value="P:positive regulation of translation"/>
    <property type="evidence" value="ECO:0007669"/>
    <property type="project" value="UniProtKB-UniRule"/>
</dbReference>
<dbReference type="CDD" id="cd03699">
    <property type="entry name" value="EF4_II"/>
    <property type="match status" value="1"/>
</dbReference>
<dbReference type="CDD" id="cd16260">
    <property type="entry name" value="EF4_III"/>
    <property type="match status" value="1"/>
</dbReference>
<dbReference type="CDD" id="cd01890">
    <property type="entry name" value="LepA"/>
    <property type="match status" value="1"/>
</dbReference>
<dbReference type="CDD" id="cd03709">
    <property type="entry name" value="lepA_C"/>
    <property type="match status" value="1"/>
</dbReference>
<dbReference type="FunFam" id="3.40.50.300:FF:000078">
    <property type="entry name" value="Elongation factor 4"/>
    <property type="match status" value="1"/>
</dbReference>
<dbReference type="FunFam" id="2.40.30.10:FF:000015">
    <property type="entry name" value="Translation factor GUF1, mitochondrial"/>
    <property type="match status" value="1"/>
</dbReference>
<dbReference type="FunFam" id="3.30.70.240:FF:000007">
    <property type="entry name" value="Translation factor GUF1, mitochondrial"/>
    <property type="match status" value="1"/>
</dbReference>
<dbReference type="FunFam" id="3.30.70.2570:FF:000001">
    <property type="entry name" value="Translation factor GUF1, mitochondrial"/>
    <property type="match status" value="1"/>
</dbReference>
<dbReference type="FunFam" id="3.30.70.870:FF:000004">
    <property type="entry name" value="Translation factor GUF1, mitochondrial"/>
    <property type="match status" value="1"/>
</dbReference>
<dbReference type="Gene3D" id="3.30.70.240">
    <property type="match status" value="1"/>
</dbReference>
<dbReference type="Gene3D" id="3.30.70.2570">
    <property type="entry name" value="Elongation factor 4, C-terminal domain"/>
    <property type="match status" value="1"/>
</dbReference>
<dbReference type="Gene3D" id="3.30.70.870">
    <property type="entry name" value="Elongation Factor G (Translational Gtpase), domain 3"/>
    <property type="match status" value="1"/>
</dbReference>
<dbReference type="Gene3D" id="3.40.50.300">
    <property type="entry name" value="P-loop containing nucleotide triphosphate hydrolases"/>
    <property type="match status" value="1"/>
</dbReference>
<dbReference type="Gene3D" id="2.40.30.10">
    <property type="entry name" value="Translation factors"/>
    <property type="match status" value="1"/>
</dbReference>
<dbReference type="HAMAP" id="MF_00071">
    <property type="entry name" value="LepA"/>
    <property type="match status" value="1"/>
</dbReference>
<dbReference type="InterPro" id="IPR006297">
    <property type="entry name" value="EF-4"/>
</dbReference>
<dbReference type="InterPro" id="IPR035647">
    <property type="entry name" value="EFG_III/V"/>
</dbReference>
<dbReference type="InterPro" id="IPR000640">
    <property type="entry name" value="EFG_V-like"/>
</dbReference>
<dbReference type="InterPro" id="IPR004161">
    <property type="entry name" value="EFTu-like_2"/>
</dbReference>
<dbReference type="InterPro" id="IPR031157">
    <property type="entry name" value="G_TR_CS"/>
</dbReference>
<dbReference type="InterPro" id="IPR038363">
    <property type="entry name" value="LepA_C_sf"/>
</dbReference>
<dbReference type="InterPro" id="IPR013842">
    <property type="entry name" value="LepA_CTD"/>
</dbReference>
<dbReference type="InterPro" id="IPR035654">
    <property type="entry name" value="LepA_IV"/>
</dbReference>
<dbReference type="InterPro" id="IPR027417">
    <property type="entry name" value="P-loop_NTPase"/>
</dbReference>
<dbReference type="InterPro" id="IPR005225">
    <property type="entry name" value="Small_GTP-bd"/>
</dbReference>
<dbReference type="InterPro" id="IPR000795">
    <property type="entry name" value="T_Tr_GTP-bd_dom"/>
</dbReference>
<dbReference type="InterPro" id="IPR009000">
    <property type="entry name" value="Transl_B-barrel_sf"/>
</dbReference>
<dbReference type="NCBIfam" id="TIGR01393">
    <property type="entry name" value="lepA"/>
    <property type="match status" value="1"/>
</dbReference>
<dbReference type="NCBIfam" id="TIGR00231">
    <property type="entry name" value="small_GTP"/>
    <property type="match status" value="1"/>
</dbReference>
<dbReference type="PANTHER" id="PTHR43512:SF4">
    <property type="entry name" value="TRANSLATION FACTOR GUF1 HOMOLOG, CHLOROPLASTIC"/>
    <property type="match status" value="1"/>
</dbReference>
<dbReference type="PANTHER" id="PTHR43512">
    <property type="entry name" value="TRANSLATION FACTOR GUF1-RELATED"/>
    <property type="match status" value="1"/>
</dbReference>
<dbReference type="Pfam" id="PF00679">
    <property type="entry name" value="EFG_C"/>
    <property type="match status" value="1"/>
</dbReference>
<dbReference type="Pfam" id="PF00009">
    <property type="entry name" value="GTP_EFTU"/>
    <property type="match status" value="1"/>
</dbReference>
<dbReference type="Pfam" id="PF03144">
    <property type="entry name" value="GTP_EFTU_D2"/>
    <property type="match status" value="1"/>
</dbReference>
<dbReference type="Pfam" id="PF06421">
    <property type="entry name" value="LepA_C"/>
    <property type="match status" value="1"/>
</dbReference>
<dbReference type="PRINTS" id="PR00315">
    <property type="entry name" value="ELONGATNFCT"/>
</dbReference>
<dbReference type="SUPFAM" id="SSF54980">
    <property type="entry name" value="EF-G C-terminal domain-like"/>
    <property type="match status" value="2"/>
</dbReference>
<dbReference type="SUPFAM" id="SSF52540">
    <property type="entry name" value="P-loop containing nucleoside triphosphate hydrolases"/>
    <property type="match status" value="1"/>
</dbReference>
<dbReference type="SUPFAM" id="SSF50447">
    <property type="entry name" value="Translation proteins"/>
    <property type="match status" value="1"/>
</dbReference>
<dbReference type="PROSITE" id="PS00301">
    <property type="entry name" value="G_TR_1"/>
    <property type="match status" value="1"/>
</dbReference>
<dbReference type="PROSITE" id="PS51722">
    <property type="entry name" value="G_TR_2"/>
    <property type="match status" value="1"/>
</dbReference>
<sequence>MDNKKIRNFAIIAHIDHGKSTLADRILEFTNTVSKRDLKEQHLDSMDLEKERGITIKLNAVQIRYNSYIFHLIDTPGHVDFTYEVSRSLAATEGALLLVDASQGIQAQTLANVYLALENNLEIIPIINKIDLPSANVDKVKAEIENTIGISAENAILISAKNGIGIEKVLEAIVNLIPPPQASDEKDPLKALVFDSYFDIYRGVIIFIRVVTGKISVGDTFKFMANNLKFSVIELGISSPNQVKKEALFAGEVGWVAASIRNAKDVEVGDTITLVENPAKSPLPGYKKLVPVMYTGFYPVDSQQYNLLKDSLEKISLSDSSIIYEPESSKALGFGFRIGFLGLLHMEILQERLEREFNLSIIATAPSVEFQITRTNGQVQIISNPSLFPEPNFISEIREPFILAKIFLPEEFLGQIMGLCQDKRGIYVDLEYIDDFRRRLIYKLPLVEVIFDFFDRLKSLSKGYASFEYEVIDYQVSKLQKLDILLNGQKIDALSMIVHKDFAYPKARDLTQKLKEIIPRHSFEVPVQAVIGSKVIARETIKAYRKDVTAKLYGGDVTRRKKLLEKQKAGKKRMKSFGVVDVPQEAFLAILKTNVNEK</sequence>
<feature type="chain" id="PRO_0000224774" description="Elongation factor 4">
    <location>
        <begin position="1"/>
        <end position="598"/>
    </location>
</feature>
<feature type="domain" description="tr-type G">
    <location>
        <begin position="4"/>
        <end position="181"/>
    </location>
</feature>
<feature type="binding site" evidence="1">
    <location>
        <begin position="16"/>
        <end position="21"/>
    </location>
    <ligand>
        <name>GTP</name>
        <dbReference type="ChEBI" id="CHEBI:37565"/>
    </ligand>
</feature>
<feature type="binding site" evidence="1">
    <location>
        <begin position="128"/>
        <end position="131"/>
    </location>
    <ligand>
        <name>GTP</name>
        <dbReference type="ChEBI" id="CHEBI:37565"/>
    </ligand>
</feature>
<protein>
    <recommendedName>
        <fullName evidence="1">Elongation factor 4</fullName>
        <shortName evidence="1">EF-4</shortName>
        <ecNumber evidence="1">3.6.5.n1</ecNumber>
    </recommendedName>
    <alternativeName>
        <fullName evidence="1">Ribosomal back-translocase LepA</fullName>
    </alternativeName>
</protein>